<evidence type="ECO:0000255" key="1">
    <source>
        <dbReference type="HAMAP-Rule" id="MF_01313"/>
    </source>
</evidence>
<keyword id="KW-0963">Cytoplasm</keyword>
<keyword id="KW-0274">FAD</keyword>
<keyword id="KW-0285">Flavoprotein</keyword>
<keyword id="KW-0520">NAD</keyword>
<keyword id="KW-0560">Oxidoreductase</keyword>
<protein>
    <recommendedName>
        <fullName evidence="1">Nitric oxide reductase FlRd-NAD(+) reductase</fullName>
        <ecNumber evidence="1">1.18.1.-</ecNumber>
    </recommendedName>
    <alternativeName>
        <fullName evidence="1">Flavorubredoxin reductase</fullName>
        <shortName evidence="1">FlRd-reductase</shortName>
        <shortName evidence="1">FlavoRb reductase</shortName>
    </alternativeName>
</protein>
<accession>Q5PF36</accession>
<gene>
    <name evidence="1" type="primary">norW</name>
    <name evidence="1" type="synonym">flrR</name>
    <name type="ordered locus">SPA2699</name>
</gene>
<organism>
    <name type="scientific">Salmonella paratyphi A (strain ATCC 9150 / SARB42)</name>
    <dbReference type="NCBI Taxonomy" id="295319"/>
    <lineage>
        <taxon>Bacteria</taxon>
        <taxon>Pseudomonadati</taxon>
        <taxon>Pseudomonadota</taxon>
        <taxon>Gammaproteobacteria</taxon>
        <taxon>Enterobacterales</taxon>
        <taxon>Enterobacteriaceae</taxon>
        <taxon>Salmonella</taxon>
    </lineage>
</organism>
<dbReference type="EC" id="1.18.1.-" evidence="1"/>
<dbReference type="EMBL" id="CP000026">
    <property type="protein sequence ID" value="AAV78556.1"/>
    <property type="molecule type" value="Genomic_DNA"/>
</dbReference>
<dbReference type="RefSeq" id="WP_000086345.1">
    <property type="nucleotide sequence ID" value="NC_006511.1"/>
</dbReference>
<dbReference type="SMR" id="Q5PF36"/>
<dbReference type="KEGG" id="spt:SPA2699"/>
<dbReference type="HOGENOM" id="CLU_003291_4_4_6"/>
<dbReference type="UniPathway" id="UPA00638"/>
<dbReference type="Proteomes" id="UP000008185">
    <property type="component" value="Chromosome"/>
</dbReference>
<dbReference type="GO" id="GO:0005737">
    <property type="term" value="C:cytoplasm"/>
    <property type="evidence" value="ECO:0007669"/>
    <property type="project" value="UniProtKB-SubCell"/>
</dbReference>
<dbReference type="GO" id="GO:0016731">
    <property type="term" value="F:oxidoreductase activity, acting on iron-sulfur proteins as donors, NAD or NADP as acceptor"/>
    <property type="evidence" value="ECO:0007669"/>
    <property type="project" value="UniProtKB-UniRule"/>
</dbReference>
<dbReference type="Gene3D" id="3.30.390.120">
    <property type="match status" value="1"/>
</dbReference>
<dbReference type="Gene3D" id="3.50.50.60">
    <property type="entry name" value="FAD/NAD(P)-binding domain"/>
    <property type="match status" value="2"/>
</dbReference>
<dbReference type="HAMAP" id="MF_01313">
    <property type="entry name" value="NorW"/>
    <property type="match status" value="1"/>
</dbReference>
<dbReference type="InterPro" id="IPR050260">
    <property type="entry name" value="FAD-bd_OxRdtase"/>
</dbReference>
<dbReference type="InterPro" id="IPR036188">
    <property type="entry name" value="FAD/NAD-bd_sf"/>
</dbReference>
<dbReference type="InterPro" id="IPR023753">
    <property type="entry name" value="FAD/NAD-binding_dom"/>
</dbReference>
<dbReference type="InterPro" id="IPR023961">
    <property type="entry name" value="NO_rdtase_NorW"/>
</dbReference>
<dbReference type="InterPro" id="IPR041364">
    <property type="entry name" value="Rbx-bd"/>
</dbReference>
<dbReference type="NCBIfam" id="NF003437">
    <property type="entry name" value="PRK04965.1"/>
    <property type="match status" value="1"/>
</dbReference>
<dbReference type="PANTHER" id="PTHR43429:SF3">
    <property type="entry name" value="NITRITE REDUCTASE [NAD(P)H]"/>
    <property type="match status" value="1"/>
</dbReference>
<dbReference type="PANTHER" id="PTHR43429">
    <property type="entry name" value="PYRIDINE NUCLEOTIDE-DISULFIDE OXIDOREDUCTASE DOMAIN-CONTAINING"/>
    <property type="match status" value="1"/>
</dbReference>
<dbReference type="Pfam" id="PF07992">
    <property type="entry name" value="Pyr_redox_2"/>
    <property type="match status" value="1"/>
</dbReference>
<dbReference type="Pfam" id="PF18113">
    <property type="entry name" value="Rbx_binding"/>
    <property type="match status" value="1"/>
</dbReference>
<dbReference type="PRINTS" id="PR00368">
    <property type="entry name" value="FADPNR"/>
</dbReference>
<dbReference type="PRINTS" id="PR00411">
    <property type="entry name" value="PNDRDTASEI"/>
</dbReference>
<dbReference type="SUPFAM" id="SSF51905">
    <property type="entry name" value="FAD/NAD(P)-binding domain"/>
    <property type="match status" value="1"/>
</dbReference>
<reference key="1">
    <citation type="journal article" date="2004" name="Nat. Genet.">
        <title>Comparison of genome degradation in Paratyphi A and Typhi, human-restricted serovars of Salmonella enterica that cause typhoid.</title>
        <authorList>
            <person name="McClelland M."/>
            <person name="Sanderson K.E."/>
            <person name="Clifton S.W."/>
            <person name="Latreille P."/>
            <person name="Porwollik S."/>
            <person name="Sabo A."/>
            <person name="Meyer R."/>
            <person name="Bieri T."/>
            <person name="Ozersky P."/>
            <person name="McLellan M."/>
            <person name="Harkins C.R."/>
            <person name="Wang C."/>
            <person name="Nguyen C."/>
            <person name="Berghoff A."/>
            <person name="Elliott G."/>
            <person name="Kohlberg S."/>
            <person name="Strong C."/>
            <person name="Du F."/>
            <person name="Carter J."/>
            <person name="Kremizki C."/>
            <person name="Layman D."/>
            <person name="Leonard S."/>
            <person name="Sun H."/>
            <person name="Fulton L."/>
            <person name="Nash W."/>
            <person name="Miner T."/>
            <person name="Minx P."/>
            <person name="Delehaunty K."/>
            <person name="Fronick C."/>
            <person name="Magrini V."/>
            <person name="Nhan M."/>
            <person name="Warren W."/>
            <person name="Florea L."/>
            <person name="Spieth J."/>
            <person name="Wilson R.K."/>
        </authorList>
    </citation>
    <scope>NUCLEOTIDE SEQUENCE [LARGE SCALE GENOMIC DNA]</scope>
    <source>
        <strain>ATCC 9150 / SARB42</strain>
    </source>
</reference>
<name>NORW_SALPA</name>
<comment type="function">
    <text evidence="1">One of at least two accessory proteins for anaerobic nitric oxide (NO) reductase. Reduces the rubredoxin moiety of NO reductase.</text>
</comment>
<comment type="catalytic activity">
    <reaction evidence="1">
        <text>2 reduced [nitric oxide reductase rubredoxin domain] + NAD(+) + H(+) = 2 oxidized [nitric oxide reductase rubredoxin domain] + NADH</text>
        <dbReference type="Rhea" id="RHEA:42960"/>
        <dbReference type="Rhea" id="RHEA-COMP:10304"/>
        <dbReference type="Rhea" id="RHEA-COMP:10305"/>
        <dbReference type="ChEBI" id="CHEBI:15378"/>
        <dbReference type="ChEBI" id="CHEBI:29033"/>
        <dbReference type="ChEBI" id="CHEBI:29034"/>
        <dbReference type="ChEBI" id="CHEBI:57540"/>
        <dbReference type="ChEBI" id="CHEBI:57945"/>
    </reaction>
</comment>
<comment type="cofactor">
    <cofactor evidence="1">
        <name>FAD</name>
        <dbReference type="ChEBI" id="CHEBI:57692"/>
    </cofactor>
</comment>
<comment type="pathway">
    <text evidence="1">Nitrogen metabolism; nitric oxide reduction.</text>
</comment>
<comment type="subcellular location">
    <subcellularLocation>
        <location evidence="1">Cytoplasm</location>
    </subcellularLocation>
</comment>
<comment type="similarity">
    <text evidence="1">Belongs to the FAD-dependent oxidoreductase family.</text>
</comment>
<proteinExistence type="inferred from homology"/>
<feature type="chain" id="PRO_0000167665" description="Nitric oxide reductase FlRd-NAD(+) reductase">
    <location>
        <begin position="1"/>
        <end position="377"/>
    </location>
</feature>
<sequence>MSRGIIIIGSGFAARQLVKNIRKQDAHVPLTLIAADSMDEYNKPDLSHVISQSQRADDLTRQLAGEFAEQFNLRLFPHTWVTDIDADAHVVKSQDKQWQYDKLVLATGAAAFVPPIAGRELMLTLNNQQEYRACETPLRDAQRVLIVGGGLIGSELAMDFCRAGKTVTLMDNAASLLASLMPPEVSSRLQHHLTDMGVHLLLKSQLQKLEKIEAGIRATLASQRSIEVDAVIAATGLRPETALARRAGVVVNRGVCVDSYLQTSHPDIYAIGDCAEINGQVLPFLQPIQLSAMYLAKNLLGGNAPLKLPAMLVKVKTPELPLHLAGETQRRDLSWQITAESDGMIAKGMSGEGQLRAFVVSEDRMKEAFALLKTLSV</sequence>